<sequence>MLRISNKIRFYCKIAAKSDLKSKLDFTQLRHPTKVPQQPEPNAFPDLDNNTDDDPIDSKTIQLLERLSLVDLDSEEALKTLKSSIQFANRIVDIPTENVPALYTVLEKQQLQLRNDSVTEGNCRQEILRNAKITDEDYFVSPPGNIPLEQQNE</sequence>
<comment type="function">
    <text evidence="1">Allows the formation of correctly charged Gln-tRNA(Gln) through the transamidation of misacylated Glu-tRNA(Gln) in the mitochondria. The reaction takes place in the presence of glutamine and ATP through an activated gamma-phospho-Glu-tRNA(Gln).</text>
</comment>
<comment type="catalytic activity">
    <reaction evidence="1">
        <text>L-glutamyl-tRNA(Gln) + L-glutamine + ATP + H2O = L-glutaminyl-tRNA(Gln) + L-glutamate + ADP + phosphate + H(+)</text>
        <dbReference type="Rhea" id="RHEA:17521"/>
        <dbReference type="Rhea" id="RHEA-COMP:9681"/>
        <dbReference type="Rhea" id="RHEA-COMP:9684"/>
        <dbReference type="ChEBI" id="CHEBI:15377"/>
        <dbReference type="ChEBI" id="CHEBI:15378"/>
        <dbReference type="ChEBI" id="CHEBI:29985"/>
        <dbReference type="ChEBI" id="CHEBI:30616"/>
        <dbReference type="ChEBI" id="CHEBI:43474"/>
        <dbReference type="ChEBI" id="CHEBI:58359"/>
        <dbReference type="ChEBI" id="CHEBI:78520"/>
        <dbReference type="ChEBI" id="CHEBI:78521"/>
        <dbReference type="ChEBI" id="CHEBI:456216"/>
    </reaction>
</comment>
<comment type="subunit">
    <text evidence="1">Subunit of the heterotrimeric GatCAB amidotransferase (AdT) complex, composed of A, B and C subunits.</text>
</comment>
<comment type="subcellular location">
    <subcellularLocation>
        <location evidence="1">Mitochondrion</location>
    </subcellularLocation>
</comment>
<comment type="miscellaneous">
    <text evidence="1">This protein may be expected to contain an N-terminal transit peptide but none has been predicted.</text>
</comment>
<comment type="similarity">
    <text evidence="1">Belongs to the GatC family.</text>
</comment>
<accession>B4MVR2</accession>
<evidence type="ECO:0000255" key="1">
    <source>
        <dbReference type="HAMAP-Rule" id="MF_03149"/>
    </source>
</evidence>
<evidence type="ECO:0000256" key="2">
    <source>
        <dbReference type="SAM" id="MobiDB-lite"/>
    </source>
</evidence>
<feature type="chain" id="PRO_0000413310" description="Glutamyl-tRNA(Gln) amidotransferase subunit C, mitochondrial">
    <location>
        <begin position="1"/>
        <end position="153"/>
    </location>
</feature>
<feature type="region of interest" description="Disordered" evidence="2">
    <location>
        <begin position="31"/>
        <end position="55"/>
    </location>
</feature>
<proteinExistence type="inferred from homology"/>
<reference key="1">
    <citation type="journal article" date="2007" name="Nature">
        <title>Evolution of genes and genomes on the Drosophila phylogeny.</title>
        <authorList>
            <consortium name="Drosophila 12 genomes consortium"/>
        </authorList>
    </citation>
    <scope>NUCLEOTIDE SEQUENCE [LARGE SCALE GENOMIC DNA]</scope>
    <source>
        <strain>Tucson 14030-0811.24</strain>
    </source>
</reference>
<keyword id="KW-0067">ATP-binding</keyword>
<keyword id="KW-0436">Ligase</keyword>
<keyword id="KW-0496">Mitochondrion</keyword>
<keyword id="KW-0547">Nucleotide-binding</keyword>
<keyword id="KW-0648">Protein biosynthesis</keyword>
<keyword id="KW-1185">Reference proteome</keyword>
<organism>
    <name type="scientific">Drosophila willistoni</name>
    <name type="common">Fruit fly</name>
    <dbReference type="NCBI Taxonomy" id="7260"/>
    <lineage>
        <taxon>Eukaryota</taxon>
        <taxon>Metazoa</taxon>
        <taxon>Ecdysozoa</taxon>
        <taxon>Arthropoda</taxon>
        <taxon>Hexapoda</taxon>
        <taxon>Insecta</taxon>
        <taxon>Pterygota</taxon>
        <taxon>Neoptera</taxon>
        <taxon>Endopterygota</taxon>
        <taxon>Diptera</taxon>
        <taxon>Brachycera</taxon>
        <taxon>Muscomorpha</taxon>
        <taxon>Ephydroidea</taxon>
        <taxon>Drosophilidae</taxon>
        <taxon>Drosophila</taxon>
        <taxon>Sophophora</taxon>
    </lineage>
</organism>
<name>GATC_DROWI</name>
<gene>
    <name type="ORF">GK15009</name>
</gene>
<protein>
    <recommendedName>
        <fullName evidence="1">Glutamyl-tRNA(Gln) amidotransferase subunit C, mitochondrial</fullName>
        <shortName evidence="1">Glu-AdT subunit C</shortName>
        <ecNumber evidence="1">6.3.5.-</ecNumber>
    </recommendedName>
</protein>
<dbReference type="EC" id="6.3.5.-" evidence="1"/>
<dbReference type="EMBL" id="CH963857">
    <property type="protein sequence ID" value="EDW75782.1"/>
    <property type="molecule type" value="Genomic_DNA"/>
</dbReference>
<dbReference type="RefSeq" id="XP_002064796.2">
    <property type="nucleotide sequence ID" value="XM_002064760.2"/>
</dbReference>
<dbReference type="SMR" id="B4MVR2"/>
<dbReference type="STRING" id="7260.B4MVR2"/>
<dbReference type="EnsemblMetazoa" id="FBtr0245660">
    <property type="protein sequence ID" value="FBpp0244152"/>
    <property type="gene ID" value="FBgn0217014"/>
</dbReference>
<dbReference type="EnsemblMetazoa" id="XM_002064760.4">
    <property type="protein sequence ID" value="XP_002064796.3"/>
    <property type="gene ID" value="LOC6641900"/>
</dbReference>
<dbReference type="GeneID" id="6641900"/>
<dbReference type="KEGG" id="dwi:6641900"/>
<dbReference type="CTD" id="283459"/>
<dbReference type="eggNOG" id="KOG4247">
    <property type="taxonomic scope" value="Eukaryota"/>
</dbReference>
<dbReference type="HOGENOM" id="CLU_105899_0_1_1"/>
<dbReference type="OMA" id="RCAKRTD"/>
<dbReference type="OrthoDB" id="5394539at2759"/>
<dbReference type="PhylomeDB" id="B4MVR2"/>
<dbReference type="Proteomes" id="UP000007798">
    <property type="component" value="Unassembled WGS sequence"/>
</dbReference>
<dbReference type="GO" id="GO:0030956">
    <property type="term" value="C:glutamyl-tRNA(Gln) amidotransferase complex"/>
    <property type="evidence" value="ECO:0007669"/>
    <property type="project" value="UniProtKB-UniRule"/>
</dbReference>
<dbReference type="GO" id="GO:0005739">
    <property type="term" value="C:mitochondrion"/>
    <property type="evidence" value="ECO:0007669"/>
    <property type="project" value="UniProtKB-SubCell"/>
</dbReference>
<dbReference type="GO" id="GO:0005524">
    <property type="term" value="F:ATP binding"/>
    <property type="evidence" value="ECO:0007669"/>
    <property type="project" value="UniProtKB-KW"/>
</dbReference>
<dbReference type="GO" id="GO:0050567">
    <property type="term" value="F:glutaminyl-tRNA synthase (glutamine-hydrolyzing) activity"/>
    <property type="evidence" value="ECO:0007669"/>
    <property type="project" value="UniProtKB-UniRule"/>
</dbReference>
<dbReference type="GO" id="GO:0070681">
    <property type="term" value="P:glutaminyl-tRNAGln biosynthesis via transamidation"/>
    <property type="evidence" value="ECO:0007669"/>
    <property type="project" value="UniProtKB-UniRule"/>
</dbReference>
<dbReference type="GO" id="GO:0032543">
    <property type="term" value="P:mitochondrial translation"/>
    <property type="evidence" value="ECO:0007669"/>
    <property type="project" value="UniProtKB-UniRule"/>
</dbReference>
<dbReference type="GO" id="GO:0006450">
    <property type="term" value="P:regulation of translational fidelity"/>
    <property type="evidence" value="ECO:0007669"/>
    <property type="project" value="InterPro"/>
</dbReference>
<dbReference type="HAMAP" id="MF_00122">
    <property type="entry name" value="GatC"/>
    <property type="match status" value="1"/>
</dbReference>
<dbReference type="InterPro" id="IPR036113">
    <property type="entry name" value="Asp/Glu-ADT_sf_sub_c"/>
</dbReference>
<dbReference type="InterPro" id="IPR003837">
    <property type="entry name" value="GatC"/>
</dbReference>
<dbReference type="PANTHER" id="PTHR15004">
    <property type="entry name" value="GLUTAMYL-TRNA(GLN) AMIDOTRANSFERASE SUBUNIT C, MITOCHONDRIAL"/>
    <property type="match status" value="1"/>
</dbReference>
<dbReference type="PANTHER" id="PTHR15004:SF0">
    <property type="entry name" value="GLUTAMYL-TRNA(GLN) AMIDOTRANSFERASE SUBUNIT C, MITOCHONDRIAL"/>
    <property type="match status" value="1"/>
</dbReference>
<dbReference type="Pfam" id="PF02686">
    <property type="entry name" value="GatC"/>
    <property type="match status" value="1"/>
</dbReference>
<dbReference type="SUPFAM" id="SSF141000">
    <property type="entry name" value="Glu-tRNAGln amidotransferase C subunit"/>
    <property type="match status" value="1"/>
</dbReference>